<dbReference type="EMBL" id="AL939122">
    <property type="protein sequence ID" value="CAC01351.1"/>
    <property type="molecule type" value="Genomic_DNA"/>
</dbReference>
<dbReference type="RefSeq" id="NP_629298.1">
    <property type="nucleotide sequence ID" value="NC_003888.3"/>
</dbReference>
<dbReference type="RefSeq" id="WP_011030086.1">
    <property type="nucleotide sequence ID" value="NZ_VNID01000008.1"/>
</dbReference>
<dbReference type="SMR" id="Q9FBK8"/>
<dbReference type="STRING" id="100226.gene:17762799"/>
<dbReference type="TCDB" id="2.A.64.2.2">
    <property type="family name" value="the twin arginine targeting (tat) family"/>
</dbReference>
<dbReference type="PaxDb" id="100226-SCO5150"/>
<dbReference type="KEGG" id="sco:SCO5150"/>
<dbReference type="PATRIC" id="fig|100226.15.peg.5233"/>
<dbReference type="eggNOG" id="COG1826">
    <property type="taxonomic scope" value="Bacteria"/>
</dbReference>
<dbReference type="HOGENOM" id="CLU_086034_2_1_11"/>
<dbReference type="InParanoid" id="Q9FBK8"/>
<dbReference type="OrthoDB" id="3267321at2"/>
<dbReference type="PhylomeDB" id="Q9FBK8"/>
<dbReference type="Proteomes" id="UP000001973">
    <property type="component" value="Chromosome"/>
</dbReference>
<dbReference type="GO" id="GO:0033281">
    <property type="term" value="C:TAT protein transport complex"/>
    <property type="evidence" value="ECO:0007669"/>
    <property type="project" value="UniProtKB-UniRule"/>
</dbReference>
<dbReference type="GO" id="GO:0008320">
    <property type="term" value="F:protein transmembrane transporter activity"/>
    <property type="evidence" value="ECO:0007669"/>
    <property type="project" value="UniProtKB-UniRule"/>
</dbReference>
<dbReference type="GO" id="GO:0043953">
    <property type="term" value="P:protein transport by the Tat complex"/>
    <property type="evidence" value="ECO:0007669"/>
    <property type="project" value="UniProtKB-UniRule"/>
</dbReference>
<dbReference type="Gene3D" id="1.20.5.3310">
    <property type="match status" value="1"/>
</dbReference>
<dbReference type="HAMAP" id="MF_00237">
    <property type="entry name" value="TatB"/>
    <property type="match status" value="1"/>
</dbReference>
<dbReference type="InterPro" id="IPR003369">
    <property type="entry name" value="TatA/B/E"/>
</dbReference>
<dbReference type="InterPro" id="IPR018448">
    <property type="entry name" value="TatB"/>
</dbReference>
<dbReference type="NCBIfam" id="NF002374">
    <property type="entry name" value="PRK01371.1-1"/>
    <property type="match status" value="1"/>
</dbReference>
<dbReference type="NCBIfam" id="NF002377">
    <property type="entry name" value="PRK01371.1-4"/>
    <property type="match status" value="1"/>
</dbReference>
<dbReference type="PANTHER" id="PTHR33162">
    <property type="entry name" value="SEC-INDEPENDENT PROTEIN TRANSLOCASE PROTEIN TATA, CHLOROPLASTIC"/>
    <property type="match status" value="1"/>
</dbReference>
<dbReference type="PANTHER" id="PTHR33162:SF1">
    <property type="entry name" value="SEC-INDEPENDENT PROTEIN TRANSLOCASE PROTEIN TATA, CHLOROPLASTIC"/>
    <property type="match status" value="1"/>
</dbReference>
<dbReference type="Pfam" id="PF02416">
    <property type="entry name" value="TatA_B_E"/>
    <property type="match status" value="1"/>
</dbReference>
<dbReference type="PRINTS" id="PR01506">
    <property type="entry name" value="TATBPROTEIN"/>
</dbReference>
<keyword id="KW-1003">Cell membrane</keyword>
<keyword id="KW-0472">Membrane</keyword>
<keyword id="KW-0653">Protein transport</keyword>
<keyword id="KW-1185">Reference proteome</keyword>
<keyword id="KW-0811">Translocation</keyword>
<keyword id="KW-0812">Transmembrane</keyword>
<keyword id="KW-1133">Transmembrane helix</keyword>
<keyword id="KW-0813">Transport</keyword>
<feature type="chain" id="PRO_0000192672" description="Sec-independent protein translocase protein TatB">
    <location>
        <begin position="1"/>
        <end position="161"/>
    </location>
</feature>
<feature type="transmembrane region" description="Helical" evidence="1">
    <location>
        <begin position="2"/>
        <end position="22"/>
    </location>
</feature>
<feature type="region of interest" description="Disordered" evidence="2">
    <location>
        <begin position="102"/>
        <end position="161"/>
    </location>
</feature>
<feature type="compositionally biased region" description="Low complexity" evidence="2">
    <location>
        <begin position="111"/>
        <end position="126"/>
    </location>
</feature>
<feature type="compositionally biased region" description="Basic and acidic residues" evidence="2">
    <location>
        <begin position="131"/>
        <end position="161"/>
    </location>
</feature>
<proteinExistence type="inferred from homology"/>
<gene>
    <name evidence="1" type="primary">tatB</name>
    <name type="ordered locus">SCO5150</name>
    <name type="ORF">SCP8.13</name>
</gene>
<reference key="1">
    <citation type="journal article" date="2002" name="Nature">
        <title>Complete genome sequence of the model actinomycete Streptomyces coelicolor A3(2).</title>
        <authorList>
            <person name="Bentley S.D."/>
            <person name="Chater K.F."/>
            <person name="Cerdeno-Tarraga A.-M."/>
            <person name="Challis G.L."/>
            <person name="Thomson N.R."/>
            <person name="James K.D."/>
            <person name="Harris D.E."/>
            <person name="Quail M.A."/>
            <person name="Kieser H."/>
            <person name="Harper D."/>
            <person name="Bateman A."/>
            <person name="Brown S."/>
            <person name="Chandra G."/>
            <person name="Chen C.W."/>
            <person name="Collins M."/>
            <person name="Cronin A."/>
            <person name="Fraser A."/>
            <person name="Goble A."/>
            <person name="Hidalgo J."/>
            <person name="Hornsby T."/>
            <person name="Howarth S."/>
            <person name="Huang C.-H."/>
            <person name="Kieser T."/>
            <person name="Larke L."/>
            <person name="Murphy L.D."/>
            <person name="Oliver K."/>
            <person name="O'Neil S."/>
            <person name="Rabbinowitsch E."/>
            <person name="Rajandream M.A."/>
            <person name="Rutherford K.M."/>
            <person name="Rutter S."/>
            <person name="Seeger K."/>
            <person name="Saunders D."/>
            <person name="Sharp S."/>
            <person name="Squares R."/>
            <person name="Squares S."/>
            <person name="Taylor K."/>
            <person name="Warren T."/>
            <person name="Wietzorrek A."/>
            <person name="Woodward J.R."/>
            <person name="Barrell B.G."/>
            <person name="Parkhill J."/>
            <person name="Hopwood D.A."/>
        </authorList>
    </citation>
    <scope>NUCLEOTIDE SEQUENCE [LARGE SCALE GENOMIC DNA]</scope>
    <source>
        <strain>ATCC BAA-471 / A3(2) / M145</strain>
    </source>
</reference>
<accession>Q9FBK8</accession>
<evidence type="ECO:0000255" key="1">
    <source>
        <dbReference type="HAMAP-Rule" id="MF_00237"/>
    </source>
</evidence>
<evidence type="ECO:0000256" key="2">
    <source>
        <dbReference type="SAM" id="MobiDB-lite"/>
    </source>
</evidence>
<comment type="function">
    <text evidence="1">Part of the twin-arginine translocation (Tat) system that transports large folded proteins containing a characteristic twin-arginine motif in their signal peptide across membranes. Together with TatC, TatB is part of a receptor directly interacting with Tat signal peptides. TatB may form an oligomeric binding site that transiently accommodates folded Tat precursor proteins before their translocation.</text>
</comment>
<comment type="subunit">
    <text evidence="1">The Tat system comprises two distinct complexes: a TatABC complex, containing multiple copies of TatA, TatB and TatC subunits, and a separate TatA complex, containing only TatA subunits. Substrates initially bind to the TatABC complex, which probably triggers association of the separate TatA complex to form the active translocon.</text>
</comment>
<comment type="subcellular location">
    <subcellularLocation>
        <location evidence="1">Cell membrane</location>
        <topology evidence="1">Single-pass membrane protein</topology>
    </subcellularLocation>
</comment>
<comment type="similarity">
    <text evidence="1">Belongs to the TatB family.</text>
</comment>
<name>TATB_STRCO</name>
<sequence>MFNDIGALELVTLVVLAVLVFGPDKLPKVIQDVTRTIRKIREFSDSAKQDIRQELGPEFKDFEFEDLNPKTFIRKQLDNEELGLKEIRNGFDLKKEMAEVTDAVHGRDAESSSSGSSSGSSSAASGNGRVDMSKKPEKPEKPGKTDKPAADDRPPFDMDAT</sequence>
<organism>
    <name type="scientific">Streptomyces coelicolor (strain ATCC BAA-471 / A3(2) / M145)</name>
    <dbReference type="NCBI Taxonomy" id="100226"/>
    <lineage>
        <taxon>Bacteria</taxon>
        <taxon>Bacillati</taxon>
        <taxon>Actinomycetota</taxon>
        <taxon>Actinomycetes</taxon>
        <taxon>Kitasatosporales</taxon>
        <taxon>Streptomycetaceae</taxon>
        <taxon>Streptomyces</taxon>
        <taxon>Streptomyces albidoflavus group</taxon>
    </lineage>
</organism>
<protein>
    <recommendedName>
        <fullName evidence="1">Sec-independent protein translocase protein TatB</fullName>
    </recommendedName>
</protein>